<name>H4_PHYPO</name>
<evidence type="ECO:0000250" key="1"/>
<evidence type="ECO:0000256" key="2">
    <source>
        <dbReference type="SAM" id="MobiDB-lite"/>
    </source>
</evidence>
<evidence type="ECO:0000305" key="3"/>
<accession>P04915</accession>
<dbReference type="EMBL" id="X00449">
    <property type="protein sequence ID" value="CAA25140.1"/>
    <property type="molecule type" value="Genomic_DNA"/>
</dbReference>
<dbReference type="EMBL" id="X15141">
    <property type="protein sequence ID" value="CAA33239.1"/>
    <property type="molecule type" value="Genomic_DNA"/>
</dbReference>
<dbReference type="EMBL" id="X15142">
    <property type="protein sequence ID" value="CAA33240.1"/>
    <property type="molecule type" value="Genomic_DNA"/>
</dbReference>
<dbReference type="EMBL" id="Y00366">
    <property type="protein sequence ID" value="CAA68442.1"/>
    <property type="molecule type" value="Genomic_DNA"/>
</dbReference>
<dbReference type="PIR" id="A27859">
    <property type="entry name" value="A27859"/>
</dbReference>
<dbReference type="PIR" id="S10076">
    <property type="entry name" value="S10076"/>
</dbReference>
<dbReference type="BMRB" id="P04915"/>
<dbReference type="SMR" id="P04915"/>
<dbReference type="GO" id="GO:0000786">
    <property type="term" value="C:nucleosome"/>
    <property type="evidence" value="ECO:0007669"/>
    <property type="project" value="UniProtKB-KW"/>
</dbReference>
<dbReference type="GO" id="GO:0005634">
    <property type="term" value="C:nucleus"/>
    <property type="evidence" value="ECO:0007669"/>
    <property type="project" value="UniProtKB-SubCell"/>
</dbReference>
<dbReference type="GO" id="GO:0003677">
    <property type="term" value="F:DNA binding"/>
    <property type="evidence" value="ECO:0007669"/>
    <property type="project" value="UniProtKB-KW"/>
</dbReference>
<dbReference type="GO" id="GO:0046982">
    <property type="term" value="F:protein heterodimerization activity"/>
    <property type="evidence" value="ECO:0007669"/>
    <property type="project" value="InterPro"/>
</dbReference>
<dbReference type="GO" id="GO:0030527">
    <property type="term" value="F:structural constituent of chromatin"/>
    <property type="evidence" value="ECO:0007669"/>
    <property type="project" value="InterPro"/>
</dbReference>
<dbReference type="CDD" id="cd22912">
    <property type="entry name" value="HFD_H4"/>
    <property type="match status" value="1"/>
</dbReference>
<dbReference type="FunFam" id="1.10.20.10:FF:000002">
    <property type="entry name" value="Histone H4"/>
    <property type="match status" value="1"/>
</dbReference>
<dbReference type="Gene3D" id="1.10.20.10">
    <property type="entry name" value="Histone, subunit A"/>
    <property type="match status" value="1"/>
</dbReference>
<dbReference type="InterPro" id="IPR035425">
    <property type="entry name" value="CENP-T/H4_C"/>
</dbReference>
<dbReference type="InterPro" id="IPR009072">
    <property type="entry name" value="Histone-fold"/>
</dbReference>
<dbReference type="InterPro" id="IPR001951">
    <property type="entry name" value="Histone_H4"/>
</dbReference>
<dbReference type="InterPro" id="IPR019809">
    <property type="entry name" value="Histone_H4_CS"/>
</dbReference>
<dbReference type="InterPro" id="IPR004823">
    <property type="entry name" value="TAF_TATA-bd_Histone-like_dom"/>
</dbReference>
<dbReference type="PANTHER" id="PTHR10484">
    <property type="entry name" value="HISTONE H4"/>
    <property type="match status" value="1"/>
</dbReference>
<dbReference type="Pfam" id="PF15511">
    <property type="entry name" value="CENP-T_C"/>
    <property type="match status" value="1"/>
</dbReference>
<dbReference type="PRINTS" id="PR00623">
    <property type="entry name" value="HISTONEH4"/>
</dbReference>
<dbReference type="SMART" id="SM00417">
    <property type="entry name" value="H4"/>
    <property type="match status" value="1"/>
</dbReference>
<dbReference type="SMART" id="SM00803">
    <property type="entry name" value="TAF"/>
    <property type="match status" value="1"/>
</dbReference>
<dbReference type="SUPFAM" id="SSF47113">
    <property type="entry name" value="Histone-fold"/>
    <property type="match status" value="1"/>
</dbReference>
<dbReference type="PROSITE" id="PS00047">
    <property type="entry name" value="HISTONE_H4"/>
    <property type="match status" value="1"/>
</dbReference>
<comment type="function">
    <text>Core component of nucleosome. Nucleosomes wrap and compact DNA into chromatin, limiting DNA accessibility to the cellular machineries which require DNA as a template. Histones thereby play a central role in transcription regulation, DNA repair, DNA replication and chromosomal stability. DNA accessibility is regulated via a complex set of post-translational modifications of histones, also called histone code, and nucleosome remodeling.</text>
</comment>
<comment type="subunit">
    <text>The nucleosome is a histone octamer containing two molecules each of H2A, H2B, H3 and H4 assembled in one H3-H4 heterotetramer and two H2A-H2B heterodimers. The octamer wraps approximately 147 bp of DNA.</text>
</comment>
<comment type="subcellular location">
    <subcellularLocation>
        <location evidence="1">Nucleus</location>
    </subcellularLocation>
    <subcellularLocation>
        <location evidence="1">Chromosome</location>
    </subcellularLocation>
</comment>
<comment type="miscellaneous">
    <text>The sequence of H41 is shown.</text>
</comment>
<comment type="similarity">
    <text evidence="3">Belongs to the histone H4 family.</text>
</comment>
<reference key="1">
    <citation type="journal article" date="1989" name="J. Mol. Evol.">
        <title>Histone genes in Physarum polycephalum: transcription and analysis of the flanking regions of the two H4 genes.</title>
        <authorList>
            <person name="Wilhelm M.L."/>
            <person name="Wilhelm F.-X."/>
        </authorList>
    </citation>
    <scope>NUCLEOTIDE SEQUENCE [GENOMIC DNA]</scope>
</reference>
<reference key="2">
    <citation type="journal article" date="1987" name="Nucleic Acids Res.">
        <title>Both histone H4 genes of Physarum polycephalum are interrupted by an intervening sequence.</title>
        <authorList>
            <person name="Wilhelm M.L."/>
            <person name="Wilhelm F.-X."/>
        </authorList>
    </citation>
    <scope>NUCLEOTIDE SEQUENCE [GENOMIC DNA]</scope>
</reference>
<reference key="3">
    <citation type="journal article" date="1984" name="FEBS Lett.">
        <title>A transposon-like DNA fragment interrupts a Physarum polycephalum histone H4 gene.</title>
        <authorList>
            <person name="Wilhelm M.L."/>
            <person name="Wilhelm F.-X."/>
        </authorList>
    </citation>
    <scope>NUCLEOTIDE SEQUENCE [GENOMIC DNA]</scope>
</reference>
<sequence>MSGRGKGGKGLGKGGAKRHRKVLRDNIQGITKPAIRRLARRGGVKRISNTIYEETRGVLKTFLENVIRDAVTYTEHARRKTVTAMDVVYALKRQGRTLYGFGG</sequence>
<feature type="initiator methionine" description="Removed" evidence="3">
    <location>
        <position position="1"/>
    </location>
</feature>
<feature type="chain" id="PRO_0000158347" description="Histone H4">
    <location>
        <begin position="2"/>
        <end position="103"/>
    </location>
</feature>
<feature type="DNA-binding region">
    <location>
        <begin position="17"/>
        <end position="21"/>
    </location>
</feature>
<feature type="region of interest" description="Disordered" evidence="2">
    <location>
        <begin position="1"/>
        <end position="20"/>
    </location>
</feature>
<feature type="compositionally biased region" description="Gly residues" evidence="2">
    <location>
        <begin position="1"/>
        <end position="14"/>
    </location>
</feature>
<feature type="sequence variant" description="In H42.">
    <original>N</original>
    <variation>K</variation>
    <location>
        <position position="49"/>
    </location>
</feature>
<gene>
    <name type="primary">H41</name>
</gene>
<gene>
    <name type="primary">H42</name>
</gene>
<protein>
    <recommendedName>
        <fullName>Histone H4</fullName>
    </recommendedName>
</protein>
<keyword id="KW-0158">Chromosome</keyword>
<keyword id="KW-0238">DNA-binding</keyword>
<keyword id="KW-0544">Nucleosome core</keyword>
<keyword id="KW-0539">Nucleus</keyword>
<organism>
    <name type="scientific">Physarum polycephalum</name>
    <name type="common">Slime mold</name>
    <dbReference type="NCBI Taxonomy" id="5791"/>
    <lineage>
        <taxon>Eukaryota</taxon>
        <taxon>Amoebozoa</taxon>
        <taxon>Evosea</taxon>
        <taxon>Eumycetozoa</taxon>
        <taxon>Myxogastria</taxon>
        <taxon>Myxogastromycetidae</taxon>
        <taxon>Physariida</taxon>
        <taxon>Physaraceae</taxon>
        <taxon>Physarum</taxon>
    </lineage>
</organism>
<proteinExistence type="inferred from homology"/>